<dbReference type="EMBL" id="M68929">
    <property type="protein sequence ID" value="AAC09463.1"/>
    <property type="molecule type" value="Genomic_DNA"/>
</dbReference>
<dbReference type="PIR" id="S26009">
    <property type="entry name" value="S26009"/>
</dbReference>
<dbReference type="RefSeq" id="NP_054466.1">
    <property type="nucleotide sequence ID" value="NC_001660.1"/>
</dbReference>
<dbReference type="SMR" id="P38453"/>
<dbReference type="GeneID" id="2702650"/>
<dbReference type="GO" id="GO:0031966">
    <property type="term" value="C:mitochondrial membrane"/>
    <property type="evidence" value="ECO:0007669"/>
    <property type="project" value="UniProtKB-SubCell"/>
</dbReference>
<dbReference type="GO" id="GO:0020037">
    <property type="term" value="F:heme binding"/>
    <property type="evidence" value="ECO:0007669"/>
    <property type="project" value="InterPro"/>
</dbReference>
<dbReference type="GO" id="GO:0015232">
    <property type="term" value="F:heme transmembrane transporter activity"/>
    <property type="evidence" value="ECO:0007669"/>
    <property type="project" value="InterPro"/>
</dbReference>
<dbReference type="GO" id="GO:0017004">
    <property type="term" value="P:cytochrome complex assembly"/>
    <property type="evidence" value="ECO:0007669"/>
    <property type="project" value="UniProtKB-KW"/>
</dbReference>
<dbReference type="InterPro" id="IPR002541">
    <property type="entry name" value="Cyt_c_assembly"/>
</dbReference>
<dbReference type="InterPro" id="IPR003557">
    <property type="entry name" value="Cyt_c_biogenesis_CcmC"/>
</dbReference>
<dbReference type="InterPro" id="IPR045062">
    <property type="entry name" value="Cyt_c_biogenesis_CcsA/CcmC"/>
</dbReference>
<dbReference type="NCBIfam" id="TIGR01191">
    <property type="entry name" value="ccmC"/>
    <property type="match status" value="1"/>
</dbReference>
<dbReference type="PANTHER" id="PTHR30071:SF1">
    <property type="entry name" value="CYTOCHROME B_B6 PROTEIN-RELATED"/>
    <property type="match status" value="1"/>
</dbReference>
<dbReference type="PANTHER" id="PTHR30071">
    <property type="entry name" value="HEME EXPORTER PROTEIN C"/>
    <property type="match status" value="1"/>
</dbReference>
<dbReference type="Pfam" id="PF01578">
    <property type="entry name" value="Cytochrom_C_asm"/>
    <property type="match status" value="1"/>
</dbReference>
<dbReference type="PRINTS" id="PR01386">
    <property type="entry name" value="CCMCBIOGNSIS"/>
</dbReference>
<feature type="chain" id="PRO_0000201562" description="Putative cytochrome c biosynthesis ccmC-like mitochondrial protein">
    <location>
        <begin position="1"/>
        <end position="228"/>
    </location>
</feature>
<feature type="transmembrane region" description="Helical" evidence="1">
    <location>
        <begin position="21"/>
        <end position="41"/>
    </location>
</feature>
<feature type="transmembrane region" description="Helical" evidence="1">
    <location>
        <begin position="60"/>
        <end position="80"/>
    </location>
</feature>
<feature type="transmembrane region" description="Helical" evidence="1">
    <location>
        <begin position="96"/>
        <end position="116"/>
    </location>
</feature>
<feature type="transmembrane region" description="Helical" evidence="1">
    <location>
        <begin position="119"/>
        <end position="139"/>
    </location>
</feature>
<feature type="transmembrane region" description="Helical" evidence="1">
    <location>
        <begin position="144"/>
        <end position="164"/>
    </location>
</feature>
<feature type="transmembrane region" description="Helical" evidence="1">
    <location>
        <begin position="192"/>
        <end position="212"/>
    </location>
</feature>
<keyword id="KW-0201">Cytochrome c-type biogenesis</keyword>
<keyword id="KW-0472">Membrane</keyword>
<keyword id="KW-0496">Mitochondrion</keyword>
<keyword id="KW-0812">Transmembrane</keyword>
<keyword id="KW-1133">Transmembrane helix</keyword>
<comment type="function">
    <text>May be involved in the export of heme to the mitochondrion for the biogenesis of c-type cytochromes.</text>
</comment>
<comment type="subcellular location">
    <subcellularLocation>
        <location evidence="2">Mitochondrion membrane</location>
        <topology evidence="2">Multi-pass membrane protein</topology>
    </subcellularLocation>
</comment>
<comment type="similarity">
    <text evidence="2">Belongs to the CcmC/CycZ/HelC family.</text>
</comment>
<gene>
    <name type="primary">CCMC</name>
    <name type="synonym">YMF5</name>
</gene>
<geneLocation type="mitochondrion"/>
<organism>
    <name type="scientific">Marchantia polymorpha</name>
    <name type="common">Common liverwort</name>
    <name type="synonym">Marchantia aquatica</name>
    <dbReference type="NCBI Taxonomy" id="3197"/>
    <lineage>
        <taxon>Eukaryota</taxon>
        <taxon>Viridiplantae</taxon>
        <taxon>Streptophyta</taxon>
        <taxon>Embryophyta</taxon>
        <taxon>Marchantiophyta</taxon>
        <taxon>Marchantiopsida</taxon>
        <taxon>Marchantiidae</taxon>
        <taxon>Marchantiales</taxon>
        <taxon>Marchantiaceae</taxon>
        <taxon>Marchantia</taxon>
    </lineage>
</organism>
<accession>P38453</accession>
<name>CCMC_MARPO</name>
<protein>
    <recommendedName>
        <fullName>Putative cytochrome c biosynthesis ccmC-like mitochondrial protein</fullName>
    </recommendedName>
</protein>
<proteinExistence type="inferred from homology"/>
<evidence type="ECO:0000255" key="1"/>
<evidence type="ECO:0000305" key="2"/>
<reference key="1">
    <citation type="journal article" date="1992" name="J. Mol. Biol.">
        <title>Gene organization deduced from the complete sequence of liverwort Marchantia polymorpha mitochondrial DNA. A primitive form of plant mitochondrial genome.</title>
        <authorList>
            <person name="Oda K."/>
            <person name="Yamato K."/>
            <person name="Ohta E."/>
            <person name="Nakamura Y."/>
            <person name="Takemura M."/>
            <person name="Nozato N."/>
            <person name="Akashi K."/>
            <person name="Kanegae T."/>
            <person name="Ogura Y."/>
            <person name="Kohchi T."/>
            <person name="Ohyama K."/>
        </authorList>
    </citation>
    <scope>NUCLEOTIDE SEQUENCE [GENOMIC DNA]</scope>
</reference>
<sequence>MYVPLLRPFFFMCCSFRYAQILIGFCWFLTAMAIYLSIWVAPSDFQQGENYRIIYVHVPAAWMSLLIYIAMAISSVLFLLTKHPLFQLFSKTAAKIGALFTLFTLVTGGFWGKPMWGTFWVWDARLTSVLILFFIYLGALRFQEFSADVASIFICIGLINIPIIKFSVNWWNTLHQPSSISQFGTSIHISMLIPIFLIFASFFFLTGIFFILETRQIILSFYFQRKSQ</sequence>